<proteinExistence type="inferred from homology"/>
<keyword id="KW-0687">Ribonucleoprotein</keyword>
<keyword id="KW-0689">Ribosomal protein</keyword>
<dbReference type="EMBL" id="CP000687">
    <property type="protein sequence ID" value="ABY70375.1"/>
    <property type="molecule type" value="Genomic_DNA"/>
</dbReference>
<dbReference type="RefSeq" id="WP_005599346.1">
    <property type="nucleotide sequence ID" value="NC_010278.1"/>
</dbReference>
<dbReference type="SMR" id="B0BSW1"/>
<dbReference type="GeneID" id="48600082"/>
<dbReference type="KEGG" id="apj:APJL_1825"/>
<dbReference type="HOGENOM" id="CLU_103507_2_2_6"/>
<dbReference type="Proteomes" id="UP000008547">
    <property type="component" value="Chromosome"/>
</dbReference>
<dbReference type="GO" id="GO:0022625">
    <property type="term" value="C:cytosolic large ribosomal subunit"/>
    <property type="evidence" value="ECO:0007669"/>
    <property type="project" value="TreeGrafter"/>
</dbReference>
<dbReference type="GO" id="GO:0003735">
    <property type="term" value="F:structural constituent of ribosome"/>
    <property type="evidence" value="ECO:0007669"/>
    <property type="project" value="InterPro"/>
</dbReference>
<dbReference type="GO" id="GO:0006412">
    <property type="term" value="P:translation"/>
    <property type="evidence" value="ECO:0007669"/>
    <property type="project" value="UniProtKB-UniRule"/>
</dbReference>
<dbReference type="FunFam" id="2.30.30.790:FF:000001">
    <property type="entry name" value="50S ribosomal protein L19"/>
    <property type="match status" value="1"/>
</dbReference>
<dbReference type="Gene3D" id="2.30.30.790">
    <property type="match status" value="1"/>
</dbReference>
<dbReference type="HAMAP" id="MF_00402">
    <property type="entry name" value="Ribosomal_bL19"/>
    <property type="match status" value="1"/>
</dbReference>
<dbReference type="InterPro" id="IPR001857">
    <property type="entry name" value="Ribosomal_bL19"/>
</dbReference>
<dbReference type="InterPro" id="IPR018257">
    <property type="entry name" value="Ribosomal_bL19_CS"/>
</dbReference>
<dbReference type="InterPro" id="IPR038657">
    <property type="entry name" value="Ribosomal_bL19_sf"/>
</dbReference>
<dbReference type="InterPro" id="IPR008991">
    <property type="entry name" value="Translation_prot_SH3-like_sf"/>
</dbReference>
<dbReference type="NCBIfam" id="TIGR01024">
    <property type="entry name" value="rplS_bact"/>
    <property type="match status" value="1"/>
</dbReference>
<dbReference type="PANTHER" id="PTHR15680:SF9">
    <property type="entry name" value="LARGE RIBOSOMAL SUBUNIT PROTEIN BL19M"/>
    <property type="match status" value="1"/>
</dbReference>
<dbReference type="PANTHER" id="PTHR15680">
    <property type="entry name" value="RIBOSOMAL PROTEIN L19"/>
    <property type="match status" value="1"/>
</dbReference>
<dbReference type="Pfam" id="PF01245">
    <property type="entry name" value="Ribosomal_L19"/>
    <property type="match status" value="1"/>
</dbReference>
<dbReference type="PIRSF" id="PIRSF002191">
    <property type="entry name" value="Ribosomal_L19"/>
    <property type="match status" value="1"/>
</dbReference>
<dbReference type="PRINTS" id="PR00061">
    <property type="entry name" value="RIBOSOMALL19"/>
</dbReference>
<dbReference type="SUPFAM" id="SSF50104">
    <property type="entry name" value="Translation proteins SH3-like domain"/>
    <property type="match status" value="1"/>
</dbReference>
<dbReference type="PROSITE" id="PS01015">
    <property type="entry name" value="RIBOSOMAL_L19"/>
    <property type="match status" value="1"/>
</dbReference>
<name>RL19_ACTPJ</name>
<reference key="1">
    <citation type="journal article" date="2008" name="PLoS ONE">
        <title>Genome biology of Actinobacillus pleuropneumoniae JL03, an isolate of serotype 3 prevalent in China.</title>
        <authorList>
            <person name="Xu Z."/>
            <person name="Zhou Y."/>
            <person name="Li L."/>
            <person name="Zhou R."/>
            <person name="Xiao S."/>
            <person name="Wan Y."/>
            <person name="Zhang S."/>
            <person name="Wang K."/>
            <person name="Li W."/>
            <person name="Li L."/>
            <person name="Jin H."/>
            <person name="Kang M."/>
            <person name="Dalai B."/>
            <person name="Li T."/>
            <person name="Liu L."/>
            <person name="Cheng Y."/>
            <person name="Zhang L."/>
            <person name="Xu T."/>
            <person name="Zheng H."/>
            <person name="Pu S."/>
            <person name="Wang B."/>
            <person name="Gu W."/>
            <person name="Zhang X.L."/>
            <person name="Zhu G.-F."/>
            <person name="Wang S."/>
            <person name="Zhao G.-P."/>
            <person name="Chen H."/>
        </authorList>
    </citation>
    <scope>NUCLEOTIDE SEQUENCE [LARGE SCALE GENOMIC DNA]</scope>
    <source>
        <strain>JL03</strain>
    </source>
</reference>
<feature type="chain" id="PRO_1000193780" description="Large ribosomal subunit protein bL19">
    <location>
        <begin position="1"/>
        <end position="116"/>
    </location>
</feature>
<protein>
    <recommendedName>
        <fullName evidence="1">Large ribosomal subunit protein bL19</fullName>
    </recommendedName>
    <alternativeName>
        <fullName evidence="2">50S ribosomal protein L19</fullName>
    </alternativeName>
</protein>
<organism>
    <name type="scientific">Actinobacillus pleuropneumoniae serotype 3 (strain JL03)</name>
    <dbReference type="NCBI Taxonomy" id="434271"/>
    <lineage>
        <taxon>Bacteria</taxon>
        <taxon>Pseudomonadati</taxon>
        <taxon>Pseudomonadota</taxon>
        <taxon>Gammaproteobacteria</taxon>
        <taxon>Pasteurellales</taxon>
        <taxon>Pasteurellaceae</taxon>
        <taxon>Actinobacillus</taxon>
    </lineage>
</organism>
<comment type="function">
    <text evidence="1">This protein is located at the 30S-50S ribosomal subunit interface and may play a role in the structure and function of the aminoacyl-tRNA binding site.</text>
</comment>
<comment type="similarity">
    <text evidence="1">Belongs to the bacterial ribosomal protein bL19 family.</text>
</comment>
<gene>
    <name evidence="1" type="primary">rplS</name>
    <name type="ordered locus">APJL_1825</name>
</gene>
<accession>B0BSW1</accession>
<sequence length="116" mass="13172">MSNIIKQIEQEQLKQNVPSFRPGDTLEVKVWVVEGSKRRLQAFEGVVIAIRNRGLHSAFTLRKVSNGVGVERVFQTHSPVVDSISVKRKGAVRKAKLYYLRERSGKSARIKERLGE</sequence>
<evidence type="ECO:0000255" key="1">
    <source>
        <dbReference type="HAMAP-Rule" id="MF_00402"/>
    </source>
</evidence>
<evidence type="ECO:0000305" key="2"/>